<accession>Q9I189</accession>
<proteinExistence type="evidence at protein level"/>
<sequence length="474" mass="51301">MSMKNLSLISACLLLGACGSTPAPLDSGLAAPSQWRYLAAGRSDASDIRQWWKAFGAPELDSLLQRALLNSQDLGAAVARVRQAQASAVIAGAPLLPELNATLGASRQKLLRDSGYSGTDATSDNDAVDSFSAGLSASYEVDFWGGRQAAYRSALESLKASEYDRATVELTLLSGVANSYLQVLALREQQRIARLNLDNAEHVLRLVETRHAAGSATALEVAQQSSLVASQRKQLPLLEQQAHEALITLATLIGEPVQALQVAERPFDSLRWPETGAGLPSELLSRRPDIANAEAQLAAAQADVQVARAALFPKLTLSASLSSGANRAADTFRNPYYNLGANLLAPIFNHGRLRAERDRSLARQEELLETYRKAILTAFADTERSLNSIDGLDRQLHWQQQELEQAQRAFDLSDSRYQAGAETLLTVLETQRTLYAAQDAAVQLRLARLQASVGLYKALGGGWQSDRQGLARKD</sequence>
<organism>
    <name type="scientific">Pseudomonas aeruginosa (strain ATCC 15692 / DSM 22644 / CIP 104116 / JCM 14847 / LMG 12228 / 1C / PRS 101 / PAO1)</name>
    <dbReference type="NCBI Taxonomy" id="208964"/>
    <lineage>
        <taxon>Bacteria</taxon>
        <taxon>Pseudomonadati</taxon>
        <taxon>Pseudomonadota</taxon>
        <taxon>Gammaproteobacteria</taxon>
        <taxon>Pseudomonadales</taxon>
        <taxon>Pseudomonadaceae</taxon>
        <taxon>Pseudomonas</taxon>
    </lineage>
</organism>
<dbReference type="EMBL" id="AE004091">
    <property type="protein sequence ID" value="AAG05779.1"/>
    <property type="molecule type" value="Genomic_DNA"/>
</dbReference>
<dbReference type="PIR" id="A83347">
    <property type="entry name" value="A83347"/>
</dbReference>
<dbReference type="RefSeq" id="NP_251081.1">
    <property type="nucleotide sequence ID" value="NC_002516.2"/>
</dbReference>
<dbReference type="SMR" id="Q9I189"/>
<dbReference type="STRING" id="208964.PA2391"/>
<dbReference type="PaxDb" id="208964-PA2391"/>
<dbReference type="GeneID" id="882223"/>
<dbReference type="KEGG" id="pae:PA2391"/>
<dbReference type="PATRIC" id="fig|208964.12.peg.2502"/>
<dbReference type="PseudoCAP" id="PA2391"/>
<dbReference type="HOGENOM" id="CLU_012817_13_1_6"/>
<dbReference type="InParanoid" id="Q9I189"/>
<dbReference type="OrthoDB" id="9770517at2"/>
<dbReference type="PhylomeDB" id="Q9I189"/>
<dbReference type="BioCyc" id="PAER208964:G1FZ6-2429-MONOMER"/>
<dbReference type="Proteomes" id="UP000002438">
    <property type="component" value="Chromosome"/>
</dbReference>
<dbReference type="GO" id="GO:0009279">
    <property type="term" value="C:cell outer membrane"/>
    <property type="evidence" value="ECO:0007669"/>
    <property type="project" value="UniProtKB-SubCell"/>
</dbReference>
<dbReference type="GO" id="GO:1990281">
    <property type="term" value="C:efflux pump complex"/>
    <property type="evidence" value="ECO:0000314"/>
    <property type="project" value="PseudoCAP"/>
</dbReference>
<dbReference type="GO" id="GO:0016020">
    <property type="term" value="C:membrane"/>
    <property type="evidence" value="ECO:0000318"/>
    <property type="project" value="GO_Central"/>
</dbReference>
<dbReference type="GO" id="GO:0015562">
    <property type="term" value="F:efflux transmembrane transporter activity"/>
    <property type="evidence" value="ECO:0000314"/>
    <property type="project" value="PseudoCAP"/>
</dbReference>
<dbReference type="GO" id="GO:0022857">
    <property type="term" value="F:transmembrane transporter activity"/>
    <property type="evidence" value="ECO:0000318"/>
    <property type="project" value="GO_Central"/>
</dbReference>
<dbReference type="GO" id="GO:0002049">
    <property type="term" value="P:pyoverdine biosynthetic process"/>
    <property type="evidence" value="ECO:0000315"/>
    <property type="project" value="PseudoCAP"/>
</dbReference>
<dbReference type="GO" id="GO:0055085">
    <property type="term" value="P:transmembrane transport"/>
    <property type="evidence" value="ECO:0000318"/>
    <property type="project" value="GO_Central"/>
</dbReference>
<dbReference type="Gene3D" id="1.20.1600.10">
    <property type="entry name" value="Outer membrane efflux proteins (OEP)"/>
    <property type="match status" value="1"/>
</dbReference>
<dbReference type="Gene3D" id="2.20.200.10">
    <property type="entry name" value="Outer membrane efflux proteins (OEP)"/>
    <property type="match status" value="1"/>
</dbReference>
<dbReference type="InterPro" id="IPR050737">
    <property type="entry name" value="OMF"/>
</dbReference>
<dbReference type="InterPro" id="IPR003423">
    <property type="entry name" value="OMP_efflux"/>
</dbReference>
<dbReference type="InterPro" id="IPR010131">
    <property type="entry name" value="RND_efflux_OM_lipoprot_NodT"/>
</dbReference>
<dbReference type="NCBIfam" id="TIGR01845">
    <property type="entry name" value="outer_NodT"/>
    <property type="match status" value="1"/>
</dbReference>
<dbReference type="PANTHER" id="PTHR30203:SF33">
    <property type="entry name" value="BLR4455 PROTEIN"/>
    <property type="match status" value="1"/>
</dbReference>
<dbReference type="PANTHER" id="PTHR30203">
    <property type="entry name" value="OUTER MEMBRANE CATION EFFLUX PROTEIN"/>
    <property type="match status" value="1"/>
</dbReference>
<dbReference type="Pfam" id="PF02321">
    <property type="entry name" value="OEP"/>
    <property type="match status" value="2"/>
</dbReference>
<dbReference type="SUPFAM" id="SSF56954">
    <property type="entry name" value="Outer membrane efflux proteins (OEP)"/>
    <property type="match status" value="1"/>
</dbReference>
<dbReference type="PROSITE" id="PS51257">
    <property type="entry name" value="PROKAR_LIPOPROTEIN"/>
    <property type="match status" value="1"/>
</dbReference>
<evidence type="ECO:0000255" key="1">
    <source>
        <dbReference type="PROSITE-ProRule" id="PRU00303"/>
    </source>
</evidence>
<evidence type="ECO:0000269" key="2">
    <source>
    </source>
</evidence>
<evidence type="ECO:0000269" key="3">
    <source>
    </source>
</evidence>
<evidence type="ECO:0000269" key="4">
    <source>
    </source>
</evidence>
<evidence type="ECO:0000269" key="5">
    <source>
    </source>
</evidence>
<evidence type="ECO:0000303" key="6">
    <source>
    </source>
</evidence>
<evidence type="ECO:0000305" key="7"/>
<evidence type="ECO:0000305" key="8">
    <source>
    </source>
</evidence>
<evidence type="ECO:0000312" key="9">
    <source>
        <dbReference type="EMBL" id="AAG05779.1"/>
    </source>
</evidence>
<comment type="function">
    <text evidence="2 3 4 5">Part of the tripartite efflux system PvdRT-OpmQ required for the secretion into the extracellular milieu of the siderophore pyoverdine (PVD), which is involved in iron acquisition (PubMed:19906986, PubMed:21035449, PubMed:22187978, PubMed:23766114). The system is responsible for export of newly synthesized PVD after the final steps of biosynthesis have taken place in the periplasm (PubMed:21035449). It is also responsible for recycling of PVD after internalization of ferri-PVD into the periplasm by the outer-membrane receptor FpvA and release of iron from PVD, thus making PVD available for new cycles of iron uptake (PubMed:19906986, PubMed:23766114). In addition, can expel unwanted metals complexed with PVD from the periplasm into the extracellular medium (PubMed:22187978).</text>
</comment>
<comment type="subunit">
    <text evidence="2 3 5">Part of the tripartite efflux system PvdRT-OpmQ, which is composed of an inner membrane component with both ATPase and permease domains, PvdT, a periplasmic membrane fusion protein, PvdR, and an outer membrane component, OpmQ.</text>
</comment>
<comment type="subcellular location">
    <subcellularLocation>
        <location evidence="8">Cell outer membrane</location>
        <topology evidence="1">Lipid-anchor</topology>
    </subcellularLocation>
</comment>
<comment type="induction">
    <text evidence="2">Expression is iron-regulated and under the tight control of the PVD-specific PvdS sigma factor.</text>
</comment>
<comment type="disruption phenotype">
    <text evidence="2 3 4 5">Mutant shows reduction of extracellular PVD levels and accumulates PVD in the periplasm (PubMed:19906986). Mutant lacking PvdRT-OpmQ secretes PVD and can import ferri-PVD, but has an approximately 20-fold increase in the amount of PVD present in the periplasm (PubMed:23766114). The pvdRT-opmQ deletion mutant also accumulates newly synthesized PVD in the periplasm (PubMed:21035449). Mutant accumulates unwanted PVD-metal complexes (PubMed:22187978).</text>
</comment>
<comment type="miscellaneous">
    <text evidence="2 3 5">Was originally thought to be involved only in PVD recycling (PubMed:19906986, PubMed:23766114). It was later shown to be involved in the secretion of both newly synthesized PVD and recycled PVD (PubMed:21035449).</text>
</comment>
<comment type="similarity">
    <text evidence="7">Belongs to the outer membrane factor (OMF) (TC 1.B.17) family.</text>
</comment>
<reference key="1">
    <citation type="journal article" date="2000" name="Nature">
        <title>Complete genome sequence of Pseudomonas aeruginosa PAO1, an opportunistic pathogen.</title>
        <authorList>
            <person name="Stover C.K."/>
            <person name="Pham X.-Q.T."/>
            <person name="Erwin A.L."/>
            <person name="Mizoguchi S.D."/>
            <person name="Warrener P."/>
            <person name="Hickey M.J."/>
            <person name="Brinkman F.S.L."/>
            <person name="Hufnagle W.O."/>
            <person name="Kowalik D.J."/>
            <person name="Lagrou M."/>
            <person name="Garber R.L."/>
            <person name="Goltry L."/>
            <person name="Tolentino E."/>
            <person name="Westbrock-Wadman S."/>
            <person name="Yuan Y."/>
            <person name="Brody L.L."/>
            <person name="Coulter S.N."/>
            <person name="Folger K.R."/>
            <person name="Kas A."/>
            <person name="Larbig K."/>
            <person name="Lim R.M."/>
            <person name="Smith K.A."/>
            <person name="Spencer D.H."/>
            <person name="Wong G.K.-S."/>
            <person name="Wu Z."/>
            <person name="Paulsen I.T."/>
            <person name="Reizer J."/>
            <person name="Saier M.H. Jr."/>
            <person name="Hancock R.E.W."/>
            <person name="Lory S."/>
            <person name="Olson M.V."/>
        </authorList>
    </citation>
    <scope>NUCLEOTIDE SEQUENCE [LARGE SCALE GENOMIC DNA]</scope>
    <source>
        <strain>ATCC 15692 / DSM 22644 / CIP 104116 / JCM 14847 / LMG 12228 / 1C / PRS 101 / PAO1</strain>
    </source>
</reference>
<reference key="2">
    <citation type="journal article" date="2009" name="Proc. Natl. Acad. Sci. U.S.A.">
        <title>Molecular basis of pyoverdine siderophore recycling in Pseudomonas aeruginosa.</title>
        <authorList>
            <person name="Imperi F."/>
            <person name="Tiburzi F."/>
            <person name="Visca P."/>
        </authorList>
    </citation>
    <scope>FUNCTION</scope>
    <scope>SUBUNIT</scope>
    <scope>INDUCTION</scope>
    <scope>DISRUPTION PHENOTYPE</scope>
    <source>
        <strain>ATCC 15692 / DSM 22644 / CIP 104116 / JCM 14847 / LMG 12228 / 1C / PRS 101 / PAO1</strain>
    </source>
</reference>
<reference key="3">
    <citation type="journal article" date="2010" name="Environ. Microbiol. Rep.">
        <title>An efflux pump is required for siderophore recycling by Pseudomonas aeruginosa.</title>
        <authorList>
            <person name="Yeterian E."/>
            <person name="Martin L.W."/>
            <person name="Lamont I.L."/>
            <person name="Schalk I.J."/>
        </authorList>
    </citation>
    <scope>FUNCTION</scope>
    <scope>SUBUNIT</scope>
    <scope>DISRUPTION PHENOTYPE</scope>
    <source>
        <strain>ATCC 15692 / DSM 22644 / CIP 104116 / JCM 14847 / LMG 12228 / 1C / PRS 101 / PAO1</strain>
    </source>
</reference>
<reference key="4">
    <citation type="journal article" date="2010" name="FEBS Lett.">
        <title>An efflux pump is involved in secretion of newly synthesized siderophore by Pseudomonas aeruginosa.</title>
        <authorList>
            <person name="Hannauer M."/>
            <person name="Yeterian E."/>
            <person name="Martin L.W."/>
            <person name="Lamont I.L."/>
            <person name="Schalk I.J."/>
        </authorList>
    </citation>
    <scope>FUNCTION IN SECRETION OF NEWLY SYNTHESIZED PYOVERDINE</scope>
    <scope>SUBUNIT</scope>
    <scope>DISRUPTION PHENOTYPE</scope>
    <source>
        <strain>ATCC 15692 / DSM 22644 / CIP 104116 / JCM 14847 / LMG 12228 / 1C / PRS 101 / PAO1</strain>
    </source>
</reference>
<reference key="5">
    <citation type="journal article" date="2012" name="Environ. Microbiol.">
        <title>The PvdRT-OpmQ efflux pump controls the metal selectivity of the iron uptake pathway mediated by the siderophore pyoverdine in Pseudomonas aeruginosa.</title>
        <authorList>
            <person name="Hannauer M."/>
            <person name="Braud A."/>
            <person name="Hoegy F."/>
            <person name="Ronot P."/>
            <person name="Boos A."/>
            <person name="Schalk I.J."/>
        </authorList>
    </citation>
    <scope>FUNCTION IN EXPORT OF UNWANTED METALS COMPLEXED WITH PVD</scope>
    <scope>DISRUPTION PHENOTYPE</scope>
    <source>
        <strain>ATCC 15692 / DSM 22644 / CIP 104116 / JCM 14847 / LMG 12228 / 1C / PRS 101 / PAO1</strain>
    </source>
</reference>
<gene>
    <name evidence="6" type="primary">opmQ</name>
    <name evidence="9" type="ordered locus">PA2391</name>
</gene>
<name>OPMQ_PSEAE</name>
<keyword id="KW-0998">Cell outer membrane</keyword>
<keyword id="KW-0449">Lipoprotein</keyword>
<keyword id="KW-0472">Membrane</keyword>
<keyword id="KW-0564">Palmitate</keyword>
<keyword id="KW-1185">Reference proteome</keyword>
<keyword id="KW-0732">Signal</keyword>
<keyword id="KW-0812">Transmembrane</keyword>
<keyword id="KW-1134">Transmembrane beta strand</keyword>
<protein>
    <recommendedName>
        <fullName evidence="7">Pyoverdine export outer membrane protein OpmQ</fullName>
    </recommendedName>
</protein>
<feature type="signal peptide" evidence="1">
    <location>
        <begin position="1"/>
        <end position="17"/>
    </location>
</feature>
<feature type="chain" id="PRO_5001442775" description="Pyoverdine export outer membrane protein OpmQ" evidence="1">
    <location>
        <begin position="18"/>
        <end position="474"/>
    </location>
</feature>
<feature type="lipid moiety-binding region" description="N-palmitoyl cysteine" evidence="1">
    <location>
        <position position="18"/>
    </location>
</feature>
<feature type="lipid moiety-binding region" description="S-diacylglycerol cysteine" evidence="1">
    <location>
        <position position="18"/>
    </location>
</feature>